<reference key="1">
    <citation type="journal article" date="2008" name="J. Bacteriol.">
        <title>Insights into the environmental resistance gene pool from the genome sequence of the multidrug-resistant environmental isolate Escherichia coli SMS-3-5.</title>
        <authorList>
            <person name="Fricke W.F."/>
            <person name="Wright M.S."/>
            <person name="Lindell A.H."/>
            <person name="Harkins D.M."/>
            <person name="Baker-Austin C."/>
            <person name="Ravel J."/>
            <person name="Stepanauskas R."/>
        </authorList>
    </citation>
    <scope>NUCLEOTIDE SEQUENCE [LARGE SCALE GENOMIC DNA]</scope>
    <source>
        <strain>SMS-3-5 / SECEC</strain>
    </source>
</reference>
<protein>
    <recommendedName>
        <fullName evidence="1">Small ribosomal subunit protein bS16</fullName>
    </recommendedName>
    <alternativeName>
        <fullName evidence="2">30S ribosomal protein S16</fullName>
    </alternativeName>
</protein>
<accession>B1LPB6</accession>
<proteinExistence type="inferred from homology"/>
<sequence length="82" mass="9191">MVTIRLARHGAKKRPFYQVVVADSRNARNGRFIERVGFFNPIASEKEEGTRLDLDRIAHWVGQGATISDRVAALIKEVNKAA</sequence>
<comment type="similarity">
    <text evidence="1">Belongs to the bacterial ribosomal protein bS16 family.</text>
</comment>
<dbReference type="EMBL" id="CP000970">
    <property type="protein sequence ID" value="ACB18371.1"/>
    <property type="molecule type" value="Genomic_DNA"/>
</dbReference>
<dbReference type="RefSeq" id="WP_000256450.1">
    <property type="nucleotide sequence ID" value="NC_010498.1"/>
</dbReference>
<dbReference type="SMR" id="B1LPB6"/>
<dbReference type="GeneID" id="93774459"/>
<dbReference type="KEGG" id="ecm:EcSMS35_2761"/>
<dbReference type="HOGENOM" id="CLU_100590_5_1_6"/>
<dbReference type="Proteomes" id="UP000007011">
    <property type="component" value="Chromosome"/>
</dbReference>
<dbReference type="GO" id="GO:0005737">
    <property type="term" value="C:cytoplasm"/>
    <property type="evidence" value="ECO:0007669"/>
    <property type="project" value="UniProtKB-ARBA"/>
</dbReference>
<dbReference type="GO" id="GO:0015935">
    <property type="term" value="C:small ribosomal subunit"/>
    <property type="evidence" value="ECO:0007669"/>
    <property type="project" value="TreeGrafter"/>
</dbReference>
<dbReference type="GO" id="GO:0003735">
    <property type="term" value="F:structural constituent of ribosome"/>
    <property type="evidence" value="ECO:0007669"/>
    <property type="project" value="InterPro"/>
</dbReference>
<dbReference type="GO" id="GO:0006412">
    <property type="term" value="P:translation"/>
    <property type="evidence" value="ECO:0007669"/>
    <property type="project" value="UniProtKB-UniRule"/>
</dbReference>
<dbReference type="FunFam" id="3.30.1320.10:FF:000001">
    <property type="entry name" value="30S ribosomal protein S16"/>
    <property type="match status" value="1"/>
</dbReference>
<dbReference type="Gene3D" id="3.30.1320.10">
    <property type="match status" value="1"/>
</dbReference>
<dbReference type="HAMAP" id="MF_00385">
    <property type="entry name" value="Ribosomal_bS16"/>
    <property type="match status" value="1"/>
</dbReference>
<dbReference type="InterPro" id="IPR000307">
    <property type="entry name" value="Ribosomal_bS16"/>
</dbReference>
<dbReference type="InterPro" id="IPR020592">
    <property type="entry name" value="Ribosomal_bS16_CS"/>
</dbReference>
<dbReference type="InterPro" id="IPR023803">
    <property type="entry name" value="Ribosomal_bS16_dom_sf"/>
</dbReference>
<dbReference type="NCBIfam" id="TIGR00002">
    <property type="entry name" value="S16"/>
    <property type="match status" value="1"/>
</dbReference>
<dbReference type="PANTHER" id="PTHR12919">
    <property type="entry name" value="30S RIBOSOMAL PROTEIN S16"/>
    <property type="match status" value="1"/>
</dbReference>
<dbReference type="PANTHER" id="PTHR12919:SF20">
    <property type="entry name" value="SMALL RIBOSOMAL SUBUNIT PROTEIN BS16M"/>
    <property type="match status" value="1"/>
</dbReference>
<dbReference type="Pfam" id="PF00886">
    <property type="entry name" value="Ribosomal_S16"/>
    <property type="match status" value="1"/>
</dbReference>
<dbReference type="SUPFAM" id="SSF54565">
    <property type="entry name" value="Ribosomal protein S16"/>
    <property type="match status" value="1"/>
</dbReference>
<dbReference type="PROSITE" id="PS00732">
    <property type="entry name" value="RIBOSOMAL_S16"/>
    <property type="match status" value="1"/>
</dbReference>
<organism>
    <name type="scientific">Escherichia coli (strain SMS-3-5 / SECEC)</name>
    <dbReference type="NCBI Taxonomy" id="439855"/>
    <lineage>
        <taxon>Bacteria</taxon>
        <taxon>Pseudomonadati</taxon>
        <taxon>Pseudomonadota</taxon>
        <taxon>Gammaproteobacteria</taxon>
        <taxon>Enterobacterales</taxon>
        <taxon>Enterobacteriaceae</taxon>
        <taxon>Escherichia</taxon>
    </lineage>
</organism>
<evidence type="ECO:0000255" key="1">
    <source>
        <dbReference type="HAMAP-Rule" id="MF_00385"/>
    </source>
</evidence>
<evidence type="ECO:0000305" key="2"/>
<name>RS16_ECOSM</name>
<gene>
    <name evidence="1" type="primary">rpsP</name>
    <name type="ordered locus">EcSMS35_2761</name>
</gene>
<keyword id="KW-0687">Ribonucleoprotein</keyword>
<keyword id="KW-0689">Ribosomal protein</keyword>
<feature type="chain" id="PRO_1000196398" description="Small ribosomal subunit protein bS16">
    <location>
        <begin position="1"/>
        <end position="82"/>
    </location>
</feature>